<organism>
    <name type="scientific">Escherichia coli O9:H4 (strain HS)</name>
    <dbReference type="NCBI Taxonomy" id="331112"/>
    <lineage>
        <taxon>Bacteria</taxon>
        <taxon>Pseudomonadati</taxon>
        <taxon>Pseudomonadota</taxon>
        <taxon>Gammaproteobacteria</taxon>
        <taxon>Enterobacterales</taxon>
        <taxon>Enterobacteriaceae</taxon>
        <taxon>Escherichia</taxon>
    </lineage>
</organism>
<proteinExistence type="inferred from homology"/>
<sequence length="467" mass="52551">MSLSLWQQCLARLQDELPATEFSMWIRPLQAELSDNTLALYAPNRFVLDWVRDKYLNNINGLLTSFCGADAPQLRFEVGTKPVTQTPQAAVTSNVAAPAQVAQTQPQRAAPSTRSGWDNVPAPAEPTYRSNVNVKHTFDNFVEGKSNQLARAAARQVADNPGGAYNPLFLYGGTGLGKTHLLHAVGNGIMARKPNAKVVYMHSERFVQDMVKALQNNAIEEFKRYYRSVDALLIDDIQFFANKERSQEEFFHTFNALLEGNQQIILTSDRYPKEINGVEDRLKSRFGWGLTVAIEPPELETRVAILMKKADENDIRLPGEVAFFIAKRLRSNVRELEGALNRVIANANFTGRAITIDFVREALRDLLALQEKLVTIDNIQKTVAEYYKIKVADLLSKRRSRSVARPRQMAMALAKELTNHSLPEIGDAFGGRDHTTVLHACRKIEQLREESHDIKEDFSNLIRTLSS</sequence>
<comment type="function">
    <text evidence="1">Plays an essential role in the initiation and regulation of chromosomal replication. ATP-DnaA binds to the origin of replication (oriC) to initiate formation of the DNA replication initiation complex once per cell cycle. Binds the DnaA box (a 9 base pair repeat at the origin) and separates the double-stranded (ds)DNA. Forms a right-handed helical filament on oriC DNA; dsDNA binds to the exterior of the filament while single-stranded (ss)DNA is stabiized in the filament's interior. The ATP-DnaA-oriC complex binds and stabilizes one strand of the AT-rich DNA unwinding element (DUE), permitting loading of DNA polymerase. After initiation quickly degrades to an ADP-DnaA complex that is not apt for DNA replication. Binds acidic phospholipids.</text>
</comment>
<comment type="subunit">
    <text evidence="1">Oligomerizes as a right-handed, spiral filament on DNA at oriC.</text>
</comment>
<comment type="subcellular location">
    <subcellularLocation>
        <location evidence="1">Cytoplasm</location>
    </subcellularLocation>
</comment>
<comment type="domain">
    <text evidence="1">Domain I is involved in oligomerization and binding regulators, domain II is flexibile and of varying length in different bacteria, domain III forms the AAA+ region, while domain IV binds dsDNA.</text>
</comment>
<comment type="similarity">
    <text evidence="1">Belongs to the DnaA family.</text>
</comment>
<name>DNAA_ECOHS</name>
<feature type="chain" id="PRO_1000060013" description="Chromosomal replication initiator protein DnaA">
    <location>
        <begin position="1"/>
        <end position="467"/>
    </location>
</feature>
<feature type="region of interest" description="Domain I, interacts with DnaA modulators" evidence="1">
    <location>
        <begin position="1"/>
        <end position="90"/>
    </location>
</feature>
<feature type="region of interest" description="Domain II" evidence="1">
    <location>
        <begin position="91"/>
        <end position="130"/>
    </location>
</feature>
<feature type="region of interest" description="Disordered" evidence="2">
    <location>
        <begin position="98"/>
        <end position="119"/>
    </location>
</feature>
<feature type="region of interest" description="Domain III, AAA+ region" evidence="1">
    <location>
        <begin position="131"/>
        <end position="347"/>
    </location>
</feature>
<feature type="region of interest" description="Domain IV, binds dsDNA" evidence="1">
    <location>
        <begin position="348"/>
        <end position="467"/>
    </location>
</feature>
<feature type="compositionally biased region" description="Low complexity" evidence="2">
    <location>
        <begin position="98"/>
        <end position="111"/>
    </location>
</feature>
<feature type="binding site" evidence="1">
    <location>
        <position position="175"/>
    </location>
    <ligand>
        <name>ATP</name>
        <dbReference type="ChEBI" id="CHEBI:30616"/>
    </ligand>
</feature>
<feature type="binding site" evidence="1">
    <location>
        <position position="177"/>
    </location>
    <ligand>
        <name>ATP</name>
        <dbReference type="ChEBI" id="CHEBI:30616"/>
    </ligand>
</feature>
<feature type="binding site" evidence="1">
    <location>
        <position position="178"/>
    </location>
    <ligand>
        <name>ATP</name>
        <dbReference type="ChEBI" id="CHEBI:30616"/>
    </ligand>
</feature>
<feature type="binding site" evidence="1">
    <location>
        <position position="179"/>
    </location>
    <ligand>
        <name>ATP</name>
        <dbReference type="ChEBI" id="CHEBI:30616"/>
    </ligand>
</feature>
<accession>A8A6G3</accession>
<protein>
    <recommendedName>
        <fullName evidence="1">Chromosomal replication initiator protein DnaA</fullName>
    </recommendedName>
</protein>
<gene>
    <name evidence="1" type="primary">dnaA</name>
    <name type="ordered locus">EcHS_A3915</name>
</gene>
<keyword id="KW-0067">ATP-binding</keyword>
<keyword id="KW-0963">Cytoplasm</keyword>
<keyword id="KW-0235">DNA replication</keyword>
<keyword id="KW-0238">DNA-binding</keyword>
<keyword id="KW-0446">Lipid-binding</keyword>
<keyword id="KW-0547">Nucleotide-binding</keyword>
<dbReference type="EMBL" id="CP000802">
    <property type="protein sequence ID" value="ABV08117.1"/>
    <property type="molecule type" value="Genomic_DNA"/>
</dbReference>
<dbReference type="RefSeq" id="WP_000059111.1">
    <property type="nucleotide sequence ID" value="NC_009800.1"/>
</dbReference>
<dbReference type="BMRB" id="A8A6G3"/>
<dbReference type="SMR" id="A8A6G3"/>
<dbReference type="GeneID" id="93778443"/>
<dbReference type="KEGG" id="ecx:EcHS_A3915"/>
<dbReference type="HOGENOM" id="CLU_026910_0_1_6"/>
<dbReference type="GO" id="GO:0005737">
    <property type="term" value="C:cytoplasm"/>
    <property type="evidence" value="ECO:0007669"/>
    <property type="project" value="UniProtKB-SubCell"/>
</dbReference>
<dbReference type="GO" id="GO:0005886">
    <property type="term" value="C:plasma membrane"/>
    <property type="evidence" value="ECO:0007669"/>
    <property type="project" value="TreeGrafter"/>
</dbReference>
<dbReference type="GO" id="GO:0005524">
    <property type="term" value="F:ATP binding"/>
    <property type="evidence" value="ECO:0007669"/>
    <property type="project" value="UniProtKB-UniRule"/>
</dbReference>
<dbReference type="GO" id="GO:0016887">
    <property type="term" value="F:ATP hydrolysis activity"/>
    <property type="evidence" value="ECO:0007669"/>
    <property type="project" value="InterPro"/>
</dbReference>
<dbReference type="GO" id="GO:0003688">
    <property type="term" value="F:DNA replication origin binding"/>
    <property type="evidence" value="ECO:0007669"/>
    <property type="project" value="UniProtKB-UniRule"/>
</dbReference>
<dbReference type="GO" id="GO:0008289">
    <property type="term" value="F:lipid binding"/>
    <property type="evidence" value="ECO:0007669"/>
    <property type="project" value="UniProtKB-KW"/>
</dbReference>
<dbReference type="GO" id="GO:0006270">
    <property type="term" value="P:DNA replication initiation"/>
    <property type="evidence" value="ECO:0007669"/>
    <property type="project" value="UniProtKB-UniRule"/>
</dbReference>
<dbReference type="GO" id="GO:0006275">
    <property type="term" value="P:regulation of DNA replication"/>
    <property type="evidence" value="ECO:0007669"/>
    <property type="project" value="UniProtKB-UniRule"/>
</dbReference>
<dbReference type="CDD" id="cd00009">
    <property type="entry name" value="AAA"/>
    <property type="match status" value="1"/>
</dbReference>
<dbReference type="CDD" id="cd06571">
    <property type="entry name" value="Bac_DnaA_C"/>
    <property type="match status" value="1"/>
</dbReference>
<dbReference type="FunFam" id="1.10.1750.10:FF:000001">
    <property type="entry name" value="Chromosomal replication initiator protein DnaA"/>
    <property type="match status" value="1"/>
</dbReference>
<dbReference type="FunFam" id="1.10.8.60:FF:000003">
    <property type="entry name" value="Chromosomal replication initiator protein DnaA"/>
    <property type="match status" value="1"/>
</dbReference>
<dbReference type="FunFam" id="3.30.300.180:FF:000001">
    <property type="entry name" value="Chromosomal replication initiator protein DnaA"/>
    <property type="match status" value="1"/>
</dbReference>
<dbReference type="FunFam" id="3.40.50.300:FF:000103">
    <property type="entry name" value="Chromosomal replication initiator protein DnaA"/>
    <property type="match status" value="1"/>
</dbReference>
<dbReference type="Gene3D" id="1.10.1750.10">
    <property type="match status" value="1"/>
</dbReference>
<dbReference type="Gene3D" id="1.10.8.60">
    <property type="match status" value="1"/>
</dbReference>
<dbReference type="Gene3D" id="3.30.300.180">
    <property type="match status" value="1"/>
</dbReference>
<dbReference type="Gene3D" id="3.40.50.300">
    <property type="entry name" value="P-loop containing nucleotide triphosphate hydrolases"/>
    <property type="match status" value="1"/>
</dbReference>
<dbReference type="HAMAP" id="MF_00377">
    <property type="entry name" value="DnaA_bact"/>
    <property type="match status" value="1"/>
</dbReference>
<dbReference type="InterPro" id="IPR003593">
    <property type="entry name" value="AAA+_ATPase"/>
</dbReference>
<dbReference type="InterPro" id="IPR001957">
    <property type="entry name" value="Chromosome_initiator_DnaA"/>
</dbReference>
<dbReference type="InterPro" id="IPR020591">
    <property type="entry name" value="Chromosome_initiator_DnaA-like"/>
</dbReference>
<dbReference type="InterPro" id="IPR018312">
    <property type="entry name" value="Chromosome_initiator_DnaA_CS"/>
</dbReference>
<dbReference type="InterPro" id="IPR013159">
    <property type="entry name" value="DnaA_C"/>
</dbReference>
<dbReference type="InterPro" id="IPR013317">
    <property type="entry name" value="DnaA_dom"/>
</dbReference>
<dbReference type="InterPro" id="IPR024633">
    <property type="entry name" value="DnaA_N_dom"/>
</dbReference>
<dbReference type="InterPro" id="IPR038454">
    <property type="entry name" value="DnaA_N_sf"/>
</dbReference>
<dbReference type="InterPro" id="IPR027417">
    <property type="entry name" value="P-loop_NTPase"/>
</dbReference>
<dbReference type="InterPro" id="IPR010921">
    <property type="entry name" value="Trp_repressor/repl_initiator"/>
</dbReference>
<dbReference type="NCBIfam" id="TIGR00362">
    <property type="entry name" value="DnaA"/>
    <property type="match status" value="1"/>
</dbReference>
<dbReference type="PANTHER" id="PTHR30050">
    <property type="entry name" value="CHROMOSOMAL REPLICATION INITIATOR PROTEIN DNAA"/>
    <property type="match status" value="1"/>
</dbReference>
<dbReference type="PANTHER" id="PTHR30050:SF2">
    <property type="entry name" value="CHROMOSOMAL REPLICATION INITIATOR PROTEIN DNAA"/>
    <property type="match status" value="1"/>
</dbReference>
<dbReference type="Pfam" id="PF00308">
    <property type="entry name" value="Bac_DnaA"/>
    <property type="match status" value="1"/>
</dbReference>
<dbReference type="Pfam" id="PF08299">
    <property type="entry name" value="Bac_DnaA_C"/>
    <property type="match status" value="1"/>
</dbReference>
<dbReference type="Pfam" id="PF11638">
    <property type="entry name" value="DnaA_N"/>
    <property type="match status" value="1"/>
</dbReference>
<dbReference type="PRINTS" id="PR00051">
    <property type="entry name" value="DNAA"/>
</dbReference>
<dbReference type="SMART" id="SM00382">
    <property type="entry name" value="AAA"/>
    <property type="match status" value="1"/>
</dbReference>
<dbReference type="SMART" id="SM00760">
    <property type="entry name" value="Bac_DnaA_C"/>
    <property type="match status" value="1"/>
</dbReference>
<dbReference type="SUPFAM" id="SSF52540">
    <property type="entry name" value="P-loop containing nucleoside triphosphate hydrolases"/>
    <property type="match status" value="1"/>
</dbReference>
<dbReference type="SUPFAM" id="SSF48295">
    <property type="entry name" value="TrpR-like"/>
    <property type="match status" value="1"/>
</dbReference>
<dbReference type="PROSITE" id="PS01008">
    <property type="entry name" value="DNAA"/>
    <property type="match status" value="1"/>
</dbReference>
<evidence type="ECO:0000255" key="1">
    <source>
        <dbReference type="HAMAP-Rule" id="MF_00377"/>
    </source>
</evidence>
<evidence type="ECO:0000256" key="2">
    <source>
        <dbReference type="SAM" id="MobiDB-lite"/>
    </source>
</evidence>
<reference key="1">
    <citation type="journal article" date="2008" name="J. Bacteriol.">
        <title>The pangenome structure of Escherichia coli: comparative genomic analysis of E. coli commensal and pathogenic isolates.</title>
        <authorList>
            <person name="Rasko D.A."/>
            <person name="Rosovitz M.J."/>
            <person name="Myers G.S.A."/>
            <person name="Mongodin E.F."/>
            <person name="Fricke W.F."/>
            <person name="Gajer P."/>
            <person name="Crabtree J."/>
            <person name="Sebaihia M."/>
            <person name="Thomson N.R."/>
            <person name="Chaudhuri R."/>
            <person name="Henderson I.R."/>
            <person name="Sperandio V."/>
            <person name="Ravel J."/>
        </authorList>
    </citation>
    <scope>NUCLEOTIDE SEQUENCE [LARGE SCALE GENOMIC DNA]</scope>
    <source>
        <strain>HS</strain>
    </source>
</reference>